<proteinExistence type="inferred from homology"/>
<gene>
    <name evidence="1" type="primary">rpsP</name>
    <name type="ordered locus">RMA_1347</name>
</gene>
<comment type="similarity">
    <text evidence="1">Belongs to the bacterial ribosomal protein bS16 family.</text>
</comment>
<protein>
    <recommendedName>
        <fullName evidence="1">Small ribosomal subunit protein bS16</fullName>
    </recommendedName>
    <alternativeName>
        <fullName evidence="3">30S ribosomal protein S16</fullName>
    </alternativeName>
</protein>
<sequence length="111" mass="12530">MAVKIRLARGGAKKRPFYRVVVANATAPRDGDFLEKVGTYDPMLALDNSERVVLKKDRIEYWLGTGAKPTERVAKFIEQAGVTLPEKVKKEMEVKAKNRKARPSKKEDKEA</sequence>
<keyword id="KW-0687">Ribonucleoprotein</keyword>
<keyword id="KW-0689">Ribosomal protein</keyword>
<reference key="1">
    <citation type="journal article" date="2007" name="Genome Res.">
        <title>Lateral gene transfer between obligate intracellular bacteria: evidence from the Rickettsia massiliae genome.</title>
        <authorList>
            <person name="Blanc G."/>
            <person name="Ogata H."/>
            <person name="Robert C."/>
            <person name="Audic S."/>
            <person name="Claverie J.-M."/>
            <person name="Raoult D."/>
        </authorList>
    </citation>
    <scope>NUCLEOTIDE SEQUENCE [LARGE SCALE GENOMIC DNA]</scope>
    <source>
        <strain>Mtu5</strain>
    </source>
</reference>
<dbReference type="EMBL" id="CP000683">
    <property type="protein sequence ID" value="ABV85284.1"/>
    <property type="molecule type" value="Genomic_DNA"/>
</dbReference>
<dbReference type="RefSeq" id="WP_012153244.1">
    <property type="nucleotide sequence ID" value="NC_009900.1"/>
</dbReference>
<dbReference type="SMR" id="A8F2Z8"/>
<dbReference type="KEGG" id="rms:RMA_1347"/>
<dbReference type="HOGENOM" id="CLU_100590_3_1_5"/>
<dbReference type="Proteomes" id="UP000001311">
    <property type="component" value="Chromosome"/>
</dbReference>
<dbReference type="GO" id="GO:0005737">
    <property type="term" value="C:cytoplasm"/>
    <property type="evidence" value="ECO:0007669"/>
    <property type="project" value="UniProtKB-ARBA"/>
</dbReference>
<dbReference type="GO" id="GO:0015935">
    <property type="term" value="C:small ribosomal subunit"/>
    <property type="evidence" value="ECO:0007669"/>
    <property type="project" value="TreeGrafter"/>
</dbReference>
<dbReference type="GO" id="GO:0003735">
    <property type="term" value="F:structural constituent of ribosome"/>
    <property type="evidence" value="ECO:0007669"/>
    <property type="project" value="InterPro"/>
</dbReference>
<dbReference type="GO" id="GO:0006412">
    <property type="term" value="P:translation"/>
    <property type="evidence" value="ECO:0007669"/>
    <property type="project" value="UniProtKB-UniRule"/>
</dbReference>
<dbReference type="Gene3D" id="3.30.1320.10">
    <property type="match status" value="1"/>
</dbReference>
<dbReference type="HAMAP" id="MF_00385">
    <property type="entry name" value="Ribosomal_bS16"/>
    <property type="match status" value="1"/>
</dbReference>
<dbReference type="InterPro" id="IPR000307">
    <property type="entry name" value="Ribosomal_bS16"/>
</dbReference>
<dbReference type="InterPro" id="IPR020592">
    <property type="entry name" value="Ribosomal_bS16_CS"/>
</dbReference>
<dbReference type="InterPro" id="IPR023803">
    <property type="entry name" value="Ribosomal_bS16_dom_sf"/>
</dbReference>
<dbReference type="NCBIfam" id="TIGR00002">
    <property type="entry name" value="S16"/>
    <property type="match status" value="1"/>
</dbReference>
<dbReference type="PANTHER" id="PTHR12919">
    <property type="entry name" value="30S RIBOSOMAL PROTEIN S16"/>
    <property type="match status" value="1"/>
</dbReference>
<dbReference type="PANTHER" id="PTHR12919:SF20">
    <property type="entry name" value="SMALL RIBOSOMAL SUBUNIT PROTEIN BS16M"/>
    <property type="match status" value="1"/>
</dbReference>
<dbReference type="Pfam" id="PF00886">
    <property type="entry name" value="Ribosomal_S16"/>
    <property type="match status" value="1"/>
</dbReference>
<dbReference type="SUPFAM" id="SSF54565">
    <property type="entry name" value="Ribosomal protein S16"/>
    <property type="match status" value="1"/>
</dbReference>
<dbReference type="PROSITE" id="PS00732">
    <property type="entry name" value="RIBOSOMAL_S16"/>
    <property type="match status" value="1"/>
</dbReference>
<organism>
    <name type="scientific">Rickettsia massiliae (strain Mtu5)</name>
    <dbReference type="NCBI Taxonomy" id="416276"/>
    <lineage>
        <taxon>Bacteria</taxon>
        <taxon>Pseudomonadati</taxon>
        <taxon>Pseudomonadota</taxon>
        <taxon>Alphaproteobacteria</taxon>
        <taxon>Rickettsiales</taxon>
        <taxon>Rickettsiaceae</taxon>
        <taxon>Rickettsieae</taxon>
        <taxon>Rickettsia</taxon>
        <taxon>spotted fever group</taxon>
    </lineage>
</organism>
<feature type="chain" id="PRO_1000060713" description="Small ribosomal subunit protein bS16">
    <location>
        <begin position="1"/>
        <end position="111"/>
    </location>
</feature>
<feature type="region of interest" description="Disordered" evidence="2">
    <location>
        <begin position="92"/>
        <end position="111"/>
    </location>
</feature>
<evidence type="ECO:0000255" key="1">
    <source>
        <dbReference type="HAMAP-Rule" id="MF_00385"/>
    </source>
</evidence>
<evidence type="ECO:0000256" key="2">
    <source>
        <dbReference type="SAM" id="MobiDB-lite"/>
    </source>
</evidence>
<evidence type="ECO:0000305" key="3"/>
<name>RS16_RICM5</name>
<accession>A8F2Z8</accession>